<dbReference type="EC" id="7.4.2.8" evidence="1"/>
<dbReference type="EMBL" id="CP001138">
    <property type="protein sequence ID" value="ACH49957.1"/>
    <property type="molecule type" value="Genomic_DNA"/>
</dbReference>
<dbReference type="RefSeq" id="WP_000905756.1">
    <property type="nucleotide sequence ID" value="NC_011149.1"/>
</dbReference>
<dbReference type="SMR" id="B5F7X1"/>
<dbReference type="KEGG" id="sea:SeAg_B0153"/>
<dbReference type="HOGENOM" id="CLU_005314_3_0_6"/>
<dbReference type="Proteomes" id="UP000008819">
    <property type="component" value="Chromosome"/>
</dbReference>
<dbReference type="GO" id="GO:0031522">
    <property type="term" value="C:cell envelope Sec protein transport complex"/>
    <property type="evidence" value="ECO:0007669"/>
    <property type="project" value="TreeGrafter"/>
</dbReference>
<dbReference type="GO" id="GO:0005829">
    <property type="term" value="C:cytosol"/>
    <property type="evidence" value="ECO:0007669"/>
    <property type="project" value="TreeGrafter"/>
</dbReference>
<dbReference type="GO" id="GO:0005886">
    <property type="term" value="C:plasma membrane"/>
    <property type="evidence" value="ECO:0007669"/>
    <property type="project" value="UniProtKB-SubCell"/>
</dbReference>
<dbReference type="GO" id="GO:0005524">
    <property type="term" value="F:ATP binding"/>
    <property type="evidence" value="ECO:0007669"/>
    <property type="project" value="UniProtKB-UniRule"/>
</dbReference>
<dbReference type="GO" id="GO:0046872">
    <property type="term" value="F:metal ion binding"/>
    <property type="evidence" value="ECO:0007669"/>
    <property type="project" value="UniProtKB-KW"/>
</dbReference>
<dbReference type="GO" id="GO:0008564">
    <property type="term" value="F:protein-exporting ATPase activity"/>
    <property type="evidence" value="ECO:0007669"/>
    <property type="project" value="UniProtKB-EC"/>
</dbReference>
<dbReference type="GO" id="GO:0065002">
    <property type="term" value="P:intracellular protein transmembrane transport"/>
    <property type="evidence" value="ECO:0007669"/>
    <property type="project" value="UniProtKB-UniRule"/>
</dbReference>
<dbReference type="GO" id="GO:0017038">
    <property type="term" value="P:protein import"/>
    <property type="evidence" value="ECO:0007669"/>
    <property type="project" value="InterPro"/>
</dbReference>
<dbReference type="GO" id="GO:0006605">
    <property type="term" value="P:protein targeting"/>
    <property type="evidence" value="ECO:0007669"/>
    <property type="project" value="UniProtKB-UniRule"/>
</dbReference>
<dbReference type="GO" id="GO:0043952">
    <property type="term" value="P:protein transport by the Sec complex"/>
    <property type="evidence" value="ECO:0007669"/>
    <property type="project" value="TreeGrafter"/>
</dbReference>
<dbReference type="CDD" id="cd17928">
    <property type="entry name" value="DEXDc_SecA"/>
    <property type="match status" value="1"/>
</dbReference>
<dbReference type="CDD" id="cd18803">
    <property type="entry name" value="SF2_C_secA"/>
    <property type="match status" value="1"/>
</dbReference>
<dbReference type="FunFam" id="1.10.3060.10:FF:000001">
    <property type="entry name" value="Preprotein translocase subunit SecA"/>
    <property type="match status" value="1"/>
</dbReference>
<dbReference type="FunFam" id="3.40.50.300:FF:000081">
    <property type="entry name" value="Preprotein translocase subunit SecA"/>
    <property type="match status" value="1"/>
</dbReference>
<dbReference type="FunFam" id="3.40.50.300:FF:000113">
    <property type="entry name" value="Preprotein translocase subunit SecA"/>
    <property type="match status" value="1"/>
</dbReference>
<dbReference type="FunFam" id="3.90.1440.10:FF:000001">
    <property type="entry name" value="Preprotein translocase subunit SecA"/>
    <property type="match status" value="1"/>
</dbReference>
<dbReference type="Gene3D" id="1.10.3060.10">
    <property type="entry name" value="Helical scaffold and wing domains of SecA"/>
    <property type="match status" value="1"/>
</dbReference>
<dbReference type="Gene3D" id="3.40.50.300">
    <property type="entry name" value="P-loop containing nucleotide triphosphate hydrolases"/>
    <property type="match status" value="2"/>
</dbReference>
<dbReference type="Gene3D" id="3.90.1440.10">
    <property type="entry name" value="SecA, preprotein cross-linking domain"/>
    <property type="match status" value="1"/>
</dbReference>
<dbReference type="HAMAP" id="MF_01382">
    <property type="entry name" value="SecA"/>
    <property type="match status" value="1"/>
</dbReference>
<dbReference type="InterPro" id="IPR014001">
    <property type="entry name" value="Helicase_ATP-bd"/>
</dbReference>
<dbReference type="InterPro" id="IPR027417">
    <property type="entry name" value="P-loop_NTPase"/>
</dbReference>
<dbReference type="InterPro" id="IPR004027">
    <property type="entry name" value="SEC_C_motif"/>
</dbReference>
<dbReference type="InterPro" id="IPR000185">
    <property type="entry name" value="SecA"/>
</dbReference>
<dbReference type="InterPro" id="IPR020937">
    <property type="entry name" value="SecA_CS"/>
</dbReference>
<dbReference type="InterPro" id="IPR011115">
    <property type="entry name" value="SecA_DEAD"/>
</dbReference>
<dbReference type="InterPro" id="IPR014018">
    <property type="entry name" value="SecA_motor_DEAD"/>
</dbReference>
<dbReference type="InterPro" id="IPR011130">
    <property type="entry name" value="SecA_preprotein_X-link_dom"/>
</dbReference>
<dbReference type="InterPro" id="IPR044722">
    <property type="entry name" value="SecA_SF2_C"/>
</dbReference>
<dbReference type="InterPro" id="IPR011116">
    <property type="entry name" value="SecA_Wing/Scaffold"/>
</dbReference>
<dbReference type="InterPro" id="IPR036266">
    <property type="entry name" value="SecA_Wing/Scaffold_sf"/>
</dbReference>
<dbReference type="InterPro" id="IPR036670">
    <property type="entry name" value="SecA_X-link_sf"/>
</dbReference>
<dbReference type="NCBIfam" id="NF009538">
    <property type="entry name" value="PRK12904.1"/>
    <property type="match status" value="1"/>
</dbReference>
<dbReference type="NCBIfam" id="TIGR00963">
    <property type="entry name" value="secA"/>
    <property type="match status" value="1"/>
</dbReference>
<dbReference type="PANTHER" id="PTHR30612:SF0">
    <property type="entry name" value="CHLOROPLAST PROTEIN-TRANSPORTING ATPASE"/>
    <property type="match status" value="1"/>
</dbReference>
<dbReference type="PANTHER" id="PTHR30612">
    <property type="entry name" value="SECA INNER MEMBRANE COMPONENT OF SEC PROTEIN SECRETION SYSTEM"/>
    <property type="match status" value="1"/>
</dbReference>
<dbReference type="Pfam" id="PF21090">
    <property type="entry name" value="P-loop_SecA"/>
    <property type="match status" value="1"/>
</dbReference>
<dbReference type="Pfam" id="PF02810">
    <property type="entry name" value="SEC-C"/>
    <property type="match status" value="1"/>
</dbReference>
<dbReference type="Pfam" id="PF07517">
    <property type="entry name" value="SecA_DEAD"/>
    <property type="match status" value="1"/>
</dbReference>
<dbReference type="Pfam" id="PF01043">
    <property type="entry name" value="SecA_PP_bind"/>
    <property type="match status" value="1"/>
</dbReference>
<dbReference type="Pfam" id="PF07516">
    <property type="entry name" value="SecA_SW"/>
    <property type="match status" value="1"/>
</dbReference>
<dbReference type="PRINTS" id="PR00906">
    <property type="entry name" value="SECA"/>
</dbReference>
<dbReference type="SMART" id="SM00957">
    <property type="entry name" value="SecA_DEAD"/>
    <property type="match status" value="1"/>
</dbReference>
<dbReference type="SMART" id="SM00958">
    <property type="entry name" value="SecA_PP_bind"/>
    <property type="match status" value="1"/>
</dbReference>
<dbReference type="SUPFAM" id="SSF81886">
    <property type="entry name" value="Helical scaffold and wing domains of SecA"/>
    <property type="match status" value="1"/>
</dbReference>
<dbReference type="SUPFAM" id="SSF52540">
    <property type="entry name" value="P-loop containing nucleoside triphosphate hydrolases"/>
    <property type="match status" value="2"/>
</dbReference>
<dbReference type="SUPFAM" id="SSF81767">
    <property type="entry name" value="Pre-protein crosslinking domain of SecA"/>
    <property type="match status" value="1"/>
</dbReference>
<dbReference type="PROSITE" id="PS01312">
    <property type="entry name" value="SECA"/>
    <property type="match status" value="1"/>
</dbReference>
<dbReference type="PROSITE" id="PS51196">
    <property type="entry name" value="SECA_MOTOR_DEAD"/>
    <property type="match status" value="1"/>
</dbReference>
<name>SECA_SALA4</name>
<evidence type="ECO:0000255" key="1">
    <source>
        <dbReference type="HAMAP-Rule" id="MF_01382"/>
    </source>
</evidence>
<proteinExistence type="inferred from homology"/>
<comment type="function">
    <text evidence="1">Part of the Sec protein translocase complex. Interacts with the SecYEG preprotein conducting channel. Has a central role in coupling the hydrolysis of ATP to the transfer of proteins into and across the cell membrane, serving both as a receptor for the preprotein-SecB complex and as an ATP-driven molecular motor driving the stepwise translocation of polypeptide chains across the membrane.</text>
</comment>
<comment type="catalytic activity">
    <reaction evidence="1">
        <text>ATP + H2O + cellular proteinSide 1 = ADP + phosphate + cellular proteinSide 2.</text>
        <dbReference type="EC" id="7.4.2.8"/>
    </reaction>
</comment>
<comment type="cofactor">
    <cofactor evidence="1">
        <name>Zn(2+)</name>
        <dbReference type="ChEBI" id="CHEBI:29105"/>
    </cofactor>
    <text evidence="1">May bind 1 zinc ion per subunit.</text>
</comment>
<comment type="subunit">
    <text evidence="1">Monomer and homodimer. Part of the essential Sec protein translocation apparatus which comprises SecA, SecYEG and auxiliary proteins SecDF-YajC and YidC.</text>
</comment>
<comment type="subcellular location">
    <subcellularLocation>
        <location evidence="1">Cell inner membrane</location>
        <topology evidence="1">Peripheral membrane protein</topology>
        <orientation evidence="1">Cytoplasmic side</orientation>
    </subcellularLocation>
    <subcellularLocation>
        <location evidence="1">Cytoplasm</location>
    </subcellularLocation>
    <text evidence="1">Distribution is 50-50.</text>
</comment>
<comment type="induction">
    <text evidence="1">Repressed under conditions of excess protein secretion capacity and derepressed when protein secretion becomes limiting. This is regulated by SecM.</text>
</comment>
<comment type="similarity">
    <text evidence="1">Belongs to the SecA family.</text>
</comment>
<feature type="chain" id="PRO_1000145053" description="Protein translocase subunit SecA">
    <location>
        <begin position="1"/>
        <end position="901"/>
    </location>
</feature>
<feature type="binding site" evidence="1">
    <location>
        <position position="87"/>
    </location>
    <ligand>
        <name>ATP</name>
        <dbReference type="ChEBI" id="CHEBI:30616"/>
    </ligand>
</feature>
<feature type="binding site" evidence="1">
    <location>
        <begin position="105"/>
        <end position="109"/>
    </location>
    <ligand>
        <name>ATP</name>
        <dbReference type="ChEBI" id="CHEBI:30616"/>
    </ligand>
</feature>
<feature type="binding site" evidence="1">
    <location>
        <position position="512"/>
    </location>
    <ligand>
        <name>ATP</name>
        <dbReference type="ChEBI" id="CHEBI:30616"/>
    </ligand>
</feature>
<feature type="binding site" evidence="1">
    <location>
        <position position="885"/>
    </location>
    <ligand>
        <name>Zn(2+)</name>
        <dbReference type="ChEBI" id="CHEBI:29105"/>
    </ligand>
</feature>
<feature type="binding site" evidence="1">
    <location>
        <position position="887"/>
    </location>
    <ligand>
        <name>Zn(2+)</name>
        <dbReference type="ChEBI" id="CHEBI:29105"/>
    </ligand>
</feature>
<feature type="binding site" evidence="1">
    <location>
        <position position="896"/>
    </location>
    <ligand>
        <name>Zn(2+)</name>
        <dbReference type="ChEBI" id="CHEBI:29105"/>
    </ligand>
</feature>
<feature type="binding site" evidence="1">
    <location>
        <position position="897"/>
    </location>
    <ligand>
        <name>Zn(2+)</name>
        <dbReference type="ChEBI" id="CHEBI:29105"/>
    </ligand>
</feature>
<accession>B5F7X1</accession>
<reference key="1">
    <citation type="journal article" date="2011" name="J. Bacteriol.">
        <title>Comparative genomics of 28 Salmonella enterica isolates: evidence for CRISPR-mediated adaptive sublineage evolution.</title>
        <authorList>
            <person name="Fricke W.F."/>
            <person name="Mammel M.K."/>
            <person name="McDermott P.F."/>
            <person name="Tartera C."/>
            <person name="White D.G."/>
            <person name="Leclerc J.E."/>
            <person name="Ravel J."/>
            <person name="Cebula T.A."/>
        </authorList>
    </citation>
    <scope>NUCLEOTIDE SEQUENCE [LARGE SCALE GENOMIC DNA]</scope>
    <source>
        <strain>SL483</strain>
    </source>
</reference>
<gene>
    <name evidence="1" type="primary">secA</name>
    <name type="ordered locus">SeAg_B0153</name>
</gene>
<keyword id="KW-0067">ATP-binding</keyword>
<keyword id="KW-0997">Cell inner membrane</keyword>
<keyword id="KW-1003">Cell membrane</keyword>
<keyword id="KW-0963">Cytoplasm</keyword>
<keyword id="KW-0472">Membrane</keyword>
<keyword id="KW-0479">Metal-binding</keyword>
<keyword id="KW-0547">Nucleotide-binding</keyword>
<keyword id="KW-0653">Protein transport</keyword>
<keyword id="KW-1278">Translocase</keyword>
<keyword id="KW-0811">Translocation</keyword>
<keyword id="KW-0813">Transport</keyword>
<keyword id="KW-0862">Zinc</keyword>
<sequence>MLIKLLTKVFGSRNDRTLRRMRKAVSLINAMEPEMEKLSDDELKAKTNEFRARIEKGESVESLIPEAFAVVREASKRVFGMRHFDVQLLGGMVLNDRCIAEMRTGEGKTLTATLPAYLNALSGKGVHVVTVNDYLAQRDAENNRPLFEFLGMSVGINLPGMPAPAKREAYAADITYGTNNEYGFDYLRDNMAFSPEERVQRKLHYALVDEVDSILIDEARTPLIISGPAEDSSEMYKKVNKIIPHLIRQEKEDSDTFQGEGHFSVDEKARQVNLTERGLVLIEELLVQEGIMDEGESLYSPGNIMLMHHVTAALRAHALFTRDVDYIVKDGEVIIVDEHTGRTMQGRRWSDGLHQAVEAKEGVEIQNENQTLASITFQNYFRLYEKLAGMTGTADTEAFEFSSIYKLDTVVVPTNRPMIRKDLPDLVYMTEAEKIQAIIEDIKERTANGQPVLVGTISIEKSEVVSRELTKAGIKHNVLNAKFHANEAGIVAQAGYPAAVTIATNMAGRGTDIMLGGSWQAEVAALEAPTEEQIAQIKADWQVRHDAVLAAGGLHIIGTERHESRRIDNQLRGRSGRQGDPGSSRFYLSMEDALMRIFASDRVSGMMRKLGMKPGEAIEHPWVTKAIANAQRKVESRNFDIRKQLLEYDDVANDQRRAIYTQRNELLDVSDVSDTINSIREDVFKATIDAYIPPQSLEEMWDIPGLQERLKNDFDLEMPIAEWLDKEPELHEETLRERILAQSIEVYQRKEEVVGAEMMRHFEKGVMLQTLDSLWKEHLAAMDYLRQGIHLRGYAQKDPKQEYKRESFAMFAAMLESLKYEVISTLSKVQVRMPEEVEAMEMQRREEAERLAQMQQLSHQDDDAAVAADLAAQTGERKIGRNDPCPCGSGKKYKQCHGRLS</sequence>
<protein>
    <recommendedName>
        <fullName evidence="1">Protein translocase subunit SecA</fullName>
        <ecNumber evidence="1">7.4.2.8</ecNumber>
    </recommendedName>
</protein>
<organism>
    <name type="scientific">Salmonella agona (strain SL483)</name>
    <dbReference type="NCBI Taxonomy" id="454166"/>
    <lineage>
        <taxon>Bacteria</taxon>
        <taxon>Pseudomonadati</taxon>
        <taxon>Pseudomonadota</taxon>
        <taxon>Gammaproteobacteria</taxon>
        <taxon>Enterobacterales</taxon>
        <taxon>Enterobacteriaceae</taxon>
        <taxon>Salmonella</taxon>
    </lineage>
</organism>